<keyword id="KW-0687">Ribonucleoprotein</keyword>
<keyword id="KW-0689">Ribosomal protein</keyword>
<proteinExistence type="inferred from homology"/>
<dbReference type="EMBL" id="CU459141">
    <property type="protein sequence ID" value="CAM88278.1"/>
    <property type="molecule type" value="Genomic_DNA"/>
</dbReference>
<dbReference type="RefSeq" id="WP_001229360.1">
    <property type="nucleotide sequence ID" value="NZ_JBDGFB010000003.1"/>
</dbReference>
<dbReference type="SMR" id="B0VDG3"/>
<dbReference type="EnsemblBacteria" id="CAM88278">
    <property type="protein sequence ID" value="CAM88278"/>
    <property type="gene ID" value="ABAYE3490"/>
</dbReference>
<dbReference type="GeneID" id="92892283"/>
<dbReference type="KEGG" id="aby:ABAYE3490"/>
<dbReference type="HOGENOM" id="CLU_086499_3_2_6"/>
<dbReference type="GO" id="GO:0022625">
    <property type="term" value="C:cytosolic large ribosomal subunit"/>
    <property type="evidence" value="ECO:0007669"/>
    <property type="project" value="TreeGrafter"/>
</dbReference>
<dbReference type="GO" id="GO:0003729">
    <property type="term" value="F:mRNA binding"/>
    <property type="evidence" value="ECO:0007669"/>
    <property type="project" value="TreeGrafter"/>
</dbReference>
<dbReference type="GO" id="GO:0003735">
    <property type="term" value="F:structural constituent of ribosome"/>
    <property type="evidence" value="ECO:0007669"/>
    <property type="project" value="InterPro"/>
</dbReference>
<dbReference type="GO" id="GO:0006412">
    <property type="term" value="P:translation"/>
    <property type="evidence" value="ECO:0007669"/>
    <property type="project" value="UniProtKB-UniRule"/>
</dbReference>
<dbReference type="CDD" id="cd00387">
    <property type="entry name" value="Ribosomal_L7_L12"/>
    <property type="match status" value="1"/>
</dbReference>
<dbReference type="FunFam" id="3.30.1390.10:FF:000001">
    <property type="entry name" value="50S ribosomal protein L7/L12"/>
    <property type="match status" value="1"/>
</dbReference>
<dbReference type="Gene3D" id="3.30.1390.10">
    <property type="match status" value="1"/>
</dbReference>
<dbReference type="Gene3D" id="1.20.5.710">
    <property type="entry name" value="Single helix bin"/>
    <property type="match status" value="1"/>
</dbReference>
<dbReference type="HAMAP" id="MF_00368">
    <property type="entry name" value="Ribosomal_bL12"/>
    <property type="match status" value="1"/>
</dbReference>
<dbReference type="InterPro" id="IPR000206">
    <property type="entry name" value="Ribosomal_bL12"/>
</dbReference>
<dbReference type="InterPro" id="IPR013823">
    <property type="entry name" value="Ribosomal_bL12_C"/>
</dbReference>
<dbReference type="InterPro" id="IPR014719">
    <property type="entry name" value="Ribosomal_bL12_C/ClpS-like"/>
</dbReference>
<dbReference type="InterPro" id="IPR008932">
    <property type="entry name" value="Ribosomal_bL12_oligo"/>
</dbReference>
<dbReference type="InterPro" id="IPR036235">
    <property type="entry name" value="Ribosomal_bL12_oligo_N_sf"/>
</dbReference>
<dbReference type="NCBIfam" id="TIGR00855">
    <property type="entry name" value="L12"/>
    <property type="match status" value="1"/>
</dbReference>
<dbReference type="PANTHER" id="PTHR45987">
    <property type="entry name" value="39S RIBOSOMAL PROTEIN L12"/>
    <property type="match status" value="1"/>
</dbReference>
<dbReference type="PANTHER" id="PTHR45987:SF4">
    <property type="entry name" value="LARGE RIBOSOMAL SUBUNIT PROTEIN BL12M"/>
    <property type="match status" value="1"/>
</dbReference>
<dbReference type="Pfam" id="PF00542">
    <property type="entry name" value="Ribosomal_L12"/>
    <property type="match status" value="1"/>
</dbReference>
<dbReference type="Pfam" id="PF16320">
    <property type="entry name" value="Ribosomal_L12_N"/>
    <property type="match status" value="1"/>
</dbReference>
<dbReference type="SUPFAM" id="SSF54736">
    <property type="entry name" value="ClpS-like"/>
    <property type="match status" value="1"/>
</dbReference>
<dbReference type="SUPFAM" id="SSF48300">
    <property type="entry name" value="Ribosomal protein L7/12, oligomerisation (N-terminal) domain"/>
    <property type="match status" value="1"/>
</dbReference>
<organism>
    <name type="scientific">Acinetobacter baumannii (strain AYE)</name>
    <dbReference type="NCBI Taxonomy" id="509173"/>
    <lineage>
        <taxon>Bacteria</taxon>
        <taxon>Pseudomonadati</taxon>
        <taxon>Pseudomonadota</taxon>
        <taxon>Gammaproteobacteria</taxon>
        <taxon>Moraxellales</taxon>
        <taxon>Moraxellaceae</taxon>
        <taxon>Acinetobacter</taxon>
        <taxon>Acinetobacter calcoaceticus/baumannii complex</taxon>
    </lineage>
</organism>
<accession>B0VDG3</accession>
<protein>
    <recommendedName>
        <fullName evidence="1">Large ribosomal subunit protein bL12</fullName>
    </recommendedName>
    <alternativeName>
        <fullName evidence="2">50S ribosomal protein L7/L12</fullName>
    </alternativeName>
</protein>
<gene>
    <name evidence="1" type="primary">rplL</name>
    <name type="ordered locus">ABAYE3490</name>
</gene>
<sequence length="123" mass="12740">MALTNEEILNAVAEKTVLELVELISAFEEKFNVSAAAVAVAAPAGGAAAAAEEQSEFNVELTSFGANKVAVIKAVREATGLGLKEAKDLVEGAPQVLKEGVSKEEGEELKKKLEEAGATVTLK</sequence>
<comment type="function">
    <text evidence="1">Forms part of the ribosomal stalk which helps the ribosome interact with GTP-bound translation factors. Is thus essential for accurate translation.</text>
</comment>
<comment type="subunit">
    <text evidence="1">Homodimer. Part of the ribosomal stalk of the 50S ribosomal subunit. Forms a multimeric L10(L12)X complex, where L10 forms an elongated spine to which 2 to 4 L12 dimers bind in a sequential fashion. Binds GTP-bound translation factors.</text>
</comment>
<comment type="similarity">
    <text evidence="1">Belongs to the bacterial ribosomal protein bL12 family.</text>
</comment>
<evidence type="ECO:0000255" key="1">
    <source>
        <dbReference type="HAMAP-Rule" id="MF_00368"/>
    </source>
</evidence>
<evidence type="ECO:0000305" key="2"/>
<reference key="1">
    <citation type="journal article" date="2008" name="PLoS ONE">
        <title>Comparative analysis of Acinetobacters: three genomes for three lifestyles.</title>
        <authorList>
            <person name="Vallenet D."/>
            <person name="Nordmann P."/>
            <person name="Barbe V."/>
            <person name="Poirel L."/>
            <person name="Mangenot S."/>
            <person name="Bataille E."/>
            <person name="Dossat C."/>
            <person name="Gas S."/>
            <person name="Kreimeyer A."/>
            <person name="Lenoble P."/>
            <person name="Oztas S."/>
            <person name="Poulain J."/>
            <person name="Segurens B."/>
            <person name="Robert C."/>
            <person name="Abergel C."/>
            <person name="Claverie J.-M."/>
            <person name="Raoult D."/>
            <person name="Medigue C."/>
            <person name="Weissenbach J."/>
            <person name="Cruveiller S."/>
        </authorList>
    </citation>
    <scope>NUCLEOTIDE SEQUENCE [LARGE SCALE GENOMIC DNA]</scope>
    <source>
        <strain>AYE</strain>
    </source>
</reference>
<name>RL7_ACIBY</name>
<feature type="chain" id="PRO_1000121378" description="Large ribosomal subunit protein bL12">
    <location>
        <begin position="1"/>
        <end position="123"/>
    </location>
</feature>